<gene>
    <name type="primary">ethA</name>
    <name type="ordered locus">MSMEG_6440</name>
    <name type="ordered locus">MSMEI_6272</name>
</gene>
<comment type="function">
    <text evidence="1">Monooxygenase able to convert a wide range of ketones to the corresponding esters or lactones via a Baeyer-Villiger oxidation reaction. Can act on long-chain aliphatic ketones (2-hexanone to 2-dodecanone) and on aromatic ketones (phenylacetone and benzylacetone). Is also able to catalyze enantioselective sulfoxidation of methyl-p-tolylsulfide. In vivo, likely functions as a BVMO, but the exact nature of the physiological substrate(s) remains to be established.</text>
</comment>
<comment type="function">
    <text evidence="1 3">Is responsible for the activation of several thiocarbamide-containing pro-drugs, such as ethionamide (ETH), isoxyl (ISO) and thiacetazone (TAC), into reactive species.</text>
</comment>
<comment type="catalytic activity">
    <reaction evidence="1">
        <text>ethionamide + NADPH + O2 + H(+) = ethionamide S-oxide + NADP(+) + H2O</text>
        <dbReference type="Rhea" id="RHEA:47616"/>
        <dbReference type="ChEBI" id="CHEBI:4885"/>
        <dbReference type="ChEBI" id="CHEBI:15377"/>
        <dbReference type="ChEBI" id="CHEBI:15378"/>
        <dbReference type="ChEBI" id="CHEBI:15379"/>
        <dbReference type="ChEBI" id="CHEBI:57783"/>
        <dbReference type="ChEBI" id="CHEBI:58349"/>
        <dbReference type="ChEBI" id="CHEBI:87805"/>
    </reaction>
</comment>
<comment type="cofactor">
    <cofactor evidence="1">
        <name>FAD</name>
        <dbReference type="ChEBI" id="CHEBI:57692"/>
    </cofactor>
    <text evidence="1">Binds 1 FAD per subunit.</text>
</comment>
<comment type="subcellular location">
    <subcellularLocation>
        <location evidence="1">Cell membrane</location>
    </subcellularLocation>
    <text evidence="1">Is most likely membrane-associated.</text>
</comment>
<comment type="induction">
    <text evidence="1">Repressed by the transcriptional regulator EthR.</text>
</comment>
<comment type="similarity">
    <text evidence="4">Belongs to the FAD-binding monooxygenase family.</text>
</comment>
<name>ETHA_MYCS2</name>
<dbReference type="EC" id="1.14.13.-" evidence="1"/>
<dbReference type="EMBL" id="CP000480">
    <property type="protein sequence ID" value="ABK75948.1"/>
    <property type="molecule type" value="Genomic_DNA"/>
</dbReference>
<dbReference type="EMBL" id="CP001663">
    <property type="protein sequence ID" value="AFP42698.1"/>
    <property type="molecule type" value="Genomic_DNA"/>
</dbReference>
<dbReference type="RefSeq" id="WP_003897853.1">
    <property type="nucleotide sequence ID" value="NZ_SIJM01000013.1"/>
</dbReference>
<dbReference type="RefSeq" id="YP_890653.1">
    <property type="nucleotide sequence ID" value="NC_008596.1"/>
</dbReference>
<dbReference type="SMR" id="A0R665"/>
<dbReference type="STRING" id="246196.MSMEG_6440"/>
<dbReference type="PaxDb" id="246196-MSMEI_6272"/>
<dbReference type="KEGG" id="msb:LJ00_31840"/>
<dbReference type="KEGG" id="msg:MSMEI_6272"/>
<dbReference type="KEGG" id="msm:MSMEG_6440"/>
<dbReference type="PATRIC" id="fig|246196.19.peg.6265"/>
<dbReference type="eggNOG" id="COG2072">
    <property type="taxonomic scope" value="Bacteria"/>
</dbReference>
<dbReference type="OrthoDB" id="5168853at2"/>
<dbReference type="Proteomes" id="UP000000757">
    <property type="component" value="Chromosome"/>
</dbReference>
<dbReference type="Proteomes" id="UP000006158">
    <property type="component" value="Chromosome"/>
</dbReference>
<dbReference type="GO" id="GO:0005886">
    <property type="term" value="C:plasma membrane"/>
    <property type="evidence" value="ECO:0007669"/>
    <property type="project" value="UniProtKB-SubCell"/>
</dbReference>
<dbReference type="GO" id="GO:0050660">
    <property type="term" value="F:flavin adenine dinucleotide binding"/>
    <property type="evidence" value="ECO:0000250"/>
    <property type="project" value="UniProtKB"/>
</dbReference>
<dbReference type="GO" id="GO:0004499">
    <property type="term" value="F:N,N-dimethylaniline monooxygenase activity"/>
    <property type="evidence" value="ECO:0007669"/>
    <property type="project" value="InterPro"/>
</dbReference>
<dbReference type="GO" id="GO:0050661">
    <property type="term" value="F:NADP binding"/>
    <property type="evidence" value="ECO:0007669"/>
    <property type="project" value="InterPro"/>
</dbReference>
<dbReference type="FunFam" id="3.50.50.60:FF:000213">
    <property type="entry name" value="FAD-containing monooxygenase EthA"/>
    <property type="match status" value="1"/>
</dbReference>
<dbReference type="FunFam" id="3.50.50.60:FF:000228">
    <property type="entry name" value="FAD-containing monooxygenase EthA"/>
    <property type="match status" value="1"/>
</dbReference>
<dbReference type="Gene3D" id="3.50.50.60">
    <property type="entry name" value="FAD/NAD(P)-binding domain"/>
    <property type="match status" value="3"/>
</dbReference>
<dbReference type="InterPro" id="IPR051820">
    <property type="entry name" value="FAD-binding_MO"/>
</dbReference>
<dbReference type="InterPro" id="IPR036188">
    <property type="entry name" value="FAD/NAD-bd_sf"/>
</dbReference>
<dbReference type="InterPro" id="IPR020946">
    <property type="entry name" value="Flavin_mOase-like"/>
</dbReference>
<dbReference type="PANTHER" id="PTHR43872">
    <property type="entry name" value="MONOOXYGENASE, PUTATIVE (AFU_ORTHOLOGUE AFUA_8G02570)-RELATED"/>
    <property type="match status" value="1"/>
</dbReference>
<dbReference type="PANTHER" id="PTHR43872:SF1">
    <property type="entry name" value="MONOOXYGENASE, PUTATIVE (AFU_ORTHOLOGUE AFUA_8G02570)-RELATED"/>
    <property type="match status" value="1"/>
</dbReference>
<dbReference type="Pfam" id="PF00743">
    <property type="entry name" value="FMO-like"/>
    <property type="match status" value="1"/>
</dbReference>
<dbReference type="Pfam" id="PF13450">
    <property type="entry name" value="NAD_binding_8"/>
    <property type="match status" value="1"/>
</dbReference>
<dbReference type="SUPFAM" id="SSF51905">
    <property type="entry name" value="FAD/NAD(P)-binding domain"/>
    <property type="match status" value="1"/>
</dbReference>
<proteinExistence type="inferred from homology"/>
<keyword id="KW-1003">Cell membrane</keyword>
<keyword id="KW-0274">FAD</keyword>
<keyword id="KW-0285">Flavoprotein</keyword>
<keyword id="KW-0472">Membrane</keyword>
<keyword id="KW-0503">Monooxygenase</keyword>
<keyword id="KW-0521">NADP</keyword>
<keyword id="KW-0560">Oxidoreductase</keyword>
<keyword id="KW-1185">Reference proteome</keyword>
<reference key="1">
    <citation type="submission" date="2006-10" db="EMBL/GenBank/DDBJ databases">
        <authorList>
            <person name="Fleischmann R.D."/>
            <person name="Dodson R.J."/>
            <person name="Haft D.H."/>
            <person name="Merkel J.S."/>
            <person name="Nelson W.C."/>
            <person name="Fraser C.M."/>
        </authorList>
    </citation>
    <scope>NUCLEOTIDE SEQUENCE [LARGE SCALE GENOMIC DNA]</scope>
    <source>
        <strain>ATCC 700084 / mc(2)155</strain>
    </source>
</reference>
<reference key="2">
    <citation type="journal article" date="2007" name="Genome Biol.">
        <title>Interrupted coding sequences in Mycobacterium smegmatis: authentic mutations or sequencing errors?</title>
        <authorList>
            <person name="Deshayes C."/>
            <person name="Perrodou E."/>
            <person name="Gallien S."/>
            <person name="Euphrasie D."/>
            <person name="Schaeffer C."/>
            <person name="Van-Dorsselaer A."/>
            <person name="Poch O."/>
            <person name="Lecompte O."/>
            <person name="Reyrat J.-M."/>
        </authorList>
    </citation>
    <scope>NUCLEOTIDE SEQUENCE [LARGE SCALE GENOMIC DNA]</scope>
    <source>
        <strain>ATCC 700084 / mc(2)155</strain>
    </source>
</reference>
<reference key="3">
    <citation type="journal article" date="2009" name="Genome Res.">
        <title>Ortho-proteogenomics: multiple proteomes investigation through orthology and a new MS-based protocol.</title>
        <authorList>
            <person name="Gallien S."/>
            <person name="Perrodou E."/>
            <person name="Carapito C."/>
            <person name="Deshayes C."/>
            <person name="Reyrat J.-M."/>
            <person name="Van Dorsselaer A."/>
            <person name="Poch O."/>
            <person name="Schaeffer C."/>
            <person name="Lecompte O."/>
        </authorList>
    </citation>
    <scope>NUCLEOTIDE SEQUENCE [LARGE SCALE GENOMIC DNA]</scope>
    <source>
        <strain>ATCC 700084 / mc(2)155</strain>
    </source>
</reference>
<organism>
    <name type="scientific">Mycolicibacterium smegmatis (strain ATCC 700084 / mc(2)155)</name>
    <name type="common">Mycobacterium smegmatis</name>
    <dbReference type="NCBI Taxonomy" id="246196"/>
    <lineage>
        <taxon>Bacteria</taxon>
        <taxon>Bacillati</taxon>
        <taxon>Actinomycetota</taxon>
        <taxon>Actinomycetes</taxon>
        <taxon>Mycobacteriales</taxon>
        <taxon>Mycobacteriaceae</taxon>
        <taxon>Mycolicibacterium</taxon>
    </lineage>
</organism>
<evidence type="ECO:0000250" key="1">
    <source>
        <dbReference type="UniProtKB" id="P9WNF9"/>
    </source>
</evidence>
<evidence type="ECO:0000250" key="2">
    <source>
        <dbReference type="UniProtKB" id="Q47PU3"/>
    </source>
</evidence>
<evidence type="ECO:0000250" key="3">
    <source>
        <dbReference type="UniProtKB" id="Q7TVI2"/>
    </source>
</evidence>
<evidence type="ECO:0000305" key="4"/>
<feature type="chain" id="PRO_0000398583" description="FAD-containing monooxygenase EthA">
    <location>
        <begin position="1"/>
        <end position="492"/>
    </location>
</feature>
<feature type="binding site" evidence="2">
    <location>
        <position position="15"/>
    </location>
    <ligand>
        <name>FAD</name>
        <dbReference type="ChEBI" id="CHEBI:57692"/>
    </ligand>
</feature>
<feature type="binding site" evidence="2">
    <location>
        <position position="36"/>
    </location>
    <ligand>
        <name>FAD</name>
        <dbReference type="ChEBI" id="CHEBI:57692"/>
    </ligand>
</feature>
<feature type="binding site" evidence="2">
    <location>
        <begin position="44"/>
        <end position="47"/>
    </location>
    <ligand>
        <name>FAD</name>
        <dbReference type="ChEBI" id="CHEBI:57692"/>
    </ligand>
</feature>
<feature type="binding site" evidence="2">
    <location>
        <begin position="54"/>
        <end position="56"/>
    </location>
    <ligand>
        <name>NADP(+)</name>
        <dbReference type="ChEBI" id="CHEBI:58349"/>
    </ligand>
</feature>
<feature type="binding site" evidence="2">
    <location>
        <position position="56"/>
    </location>
    <ligand>
        <name>FAD</name>
        <dbReference type="ChEBI" id="CHEBI:57692"/>
    </ligand>
</feature>
<feature type="binding site" evidence="2">
    <location>
        <position position="104"/>
    </location>
    <ligand>
        <name>FAD</name>
        <dbReference type="ChEBI" id="CHEBI:57692"/>
    </ligand>
</feature>
<feature type="binding site" evidence="2">
    <location>
        <begin position="183"/>
        <end position="189"/>
    </location>
    <ligand>
        <name>NADP(+)</name>
        <dbReference type="ChEBI" id="CHEBI:58349"/>
    </ligand>
</feature>
<feature type="binding site" evidence="2">
    <location>
        <begin position="207"/>
        <end position="208"/>
    </location>
    <ligand>
        <name>NADP(+)</name>
        <dbReference type="ChEBI" id="CHEBI:58349"/>
    </ligand>
</feature>
<feature type="site" description="Transition state stabilizer" evidence="2">
    <location>
        <position position="292"/>
    </location>
</feature>
<accession>A0R665</accession>
<accession>I7FUV7</accession>
<sequence>MTEHFDVVIVGAGISGISTAWHLQDRCPTKSYVILERRANIGGTWDLFKYPGIRSDSDMFTLGFRFKPWTSAKSIADGPSIWNYINEAAQENGIDKHIRTNHRVLGADWSDAENRWTITVEADGEQKQITASFLSVCSGYYNYDQGYSPEFPGADDFAGQIIHPQHWPEDLDYAGKKIVVIGSGATAVTLIPSLVNGGAAHVTMLQRSPTYIGSLPLVDPVAEKTNKYLPKNLAHFVNRWKAIAFSTAQYQLARKFPNYMRKTLMTMAQRRLPEGFDVQKHFGPRYNPWDERLCLAPNGDLFKTIRAGKADVVTDTIAKFTETGIKLTSGEELTADIIITATGLNMQLFGGASLTRNGQEVDLTETMTYKGLMLSGVPNMAITFGYTNASWTLKADLVSEFICRVLNYMDDNGFDRVEPQHPGDAVDALPFMDFNPGYFRRAMDSLPKSGSRAPWRLKQNYFFDLRMIRYDKVDEESLHFTKHRAAVSASSS</sequence>
<protein>
    <recommendedName>
        <fullName>FAD-containing monooxygenase EthA</fullName>
        <ecNumber evidence="1">1.14.13.-</ecNumber>
    </recommendedName>
    <alternativeName>
        <fullName>Baeyer-Villiger monooxygenase</fullName>
        <shortName>BVMO</shortName>
    </alternativeName>
    <alternativeName>
        <fullName>Prodrug activator EtaA</fullName>
    </alternativeName>
</protein>